<evidence type="ECO:0000255" key="1"/>
<evidence type="ECO:0000305" key="2"/>
<sequence>MFYQLLHSVLSLVGILSNAFMMYLALKKSPKIMRSYSVVITIKTGTDILASSMSFFVMQRIITDGSSIVVNPTGPCTSFGKSACYAGHMFMLCFLEYDLVWLITSYLFRYTILRGRELCIKKLVRIAFYVFIPSMVHMGVWISIYILTESESVLKGFGIETDDMILSGEIIYWSSITLLTQLFITACLAVVAYTFIRKSLSKFARKMSVIKTNEKNLRNRLVKVATFKLILPSFIFLGITVFVAMFTRLLDYQYGQYIVSVCFMFSPVCSPYAYIIFVPHYRKFIFGRKENVPKLEQGQCETPESPRNTPNLPYIYYI</sequence>
<accession>P91210</accession>
<gene>
    <name type="primary">srd-25</name>
    <name type="ORF">F07C4.4</name>
</gene>
<comment type="subcellular location">
    <subcellularLocation>
        <location evidence="2">Membrane</location>
        <topology evidence="2">Multi-pass membrane protein</topology>
    </subcellularLocation>
</comment>
<comment type="similarity">
    <text evidence="2">Belongs to the nematode receptor-like protein srd family.</text>
</comment>
<name>SRD25_CAEEL</name>
<organism>
    <name type="scientific">Caenorhabditis elegans</name>
    <dbReference type="NCBI Taxonomy" id="6239"/>
    <lineage>
        <taxon>Eukaryota</taxon>
        <taxon>Metazoa</taxon>
        <taxon>Ecdysozoa</taxon>
        <taxon>Nematoda</taxon>
        <taxon>Chromadorea</taxon>
        <taxon>Rhabditida</taxon>
        <taxon>Rhabditina</taxon>
        <taxon>Rhabditomorpha</taxon>
        <taxon>Rhabditoidea</taxon>
        <taxon>Rhabditidae</taxon>
        <taxon>Peloderinae</taxon>
        <taxon>Caenorhabditis</taxon>
    </lineage>
</organism>
<dbReference type="EMBL" id="FO080513">
    <property type="protein sequence ID" value="CCD64293.1"/>
    <property type="molecule type" value="Genomic_DNA"/>
</dbReference>
<dbReference type="PIR" id="T28941">
    <property type="entry name" value="T28941"/>
</dbReference>
<dbReference type="RefSeq" id="NP_504973.1">
    <property type="nucleotide sequence ID" value="NM_072572.1"/>
</dbReference>
<dbReference type="SMR" id="P91210"/>
<dbReference type="FunCoup" id="P91210">
    <property type="interactions" value="4"/>
</dbReference>
<dbReference type="PaxDb" id="6239-F07C4.4"/>
<dbReference type="EnsemblMetazoa" id="F07C4.4.1">
    <property type="protein sequence ID" value="F07C4.4.1"/>
    <property type="gene ID" value="WBGene00005103"/>
</dbReference>
<dbReference type="GeneID" id="191811"/>
<dbReference type="KEGG" id="cel:CELE_F07C4.4"/>
<dbReference type="UCSC" id="F07C4.4">
    <property type="organism name" value="c. elegans"/>
</dbReference>
<dbReference type="AGR" id="WB:WBGene00005103"/>
<dbReference type="CTD" id="191811"/>
<dbReference type="WormBase" id="F07C4.4">
    <property type="protein sequence ID" value="CE09203"/>
    <property type="gene ID" value="WBGene00005103"/>
    <property type="gene designation" value="srd-25"/>
</dbReference>
<dbReference type="eggNOG" id="ENOG502TJS3">
    <property type="taxonomic scope" value="Eukaryota"/>
</dbReference>
<dbReference type="GeneTree" id="ENSGT00970000195825"/>
<dbReference type="HOGENOM" id="CLU_057924_3_1_1"/>
<dbReference type="InParanoid" id="P91210"/>
<dbReference type="OrthoDB" id="5888683at2759"/>
<dbReference type="PhylomeDB" id="P91210"/>
<dbReference type="PRO" id="PR:P91210"/>
<dbReference type="Proteomes" id="UP000001940">
    <property type="component" value="Chromosome V"/>
</dbReference>
<dbReference type="GO" id="GO:0016020">
    <property type="term" value="C:membrane"/>
    <property type="evidence" value="ECO:0007669"/>
    <property type="project" value="UniProtKB-SubCell"/>
</dbReference>
<dbReference type="Gene3D" id="1.20.1070.10">
    <property type="entry name" value="Rhodopsin 7-helix transmembrane proteins"/>
    <property type="match status" value="1"/>
</dbReference>
<dbReference type="InterPro" id="IPR019421">
    <property type="entry name" value="7TM_GPCR_serpentine_rcpt_Srd"/>
</dbReference>
<dbReference type="InterPro" id="IPR050920">
    <property type="entry name" value="Nematode_rcpt-like_delta"/>
</dbReference>
<dbReference type="PANTHER" id="PTHR22945:SF9">
    <property type="entry name" value="SERPENTINE RECEPTOR, CLASS D (DELTA)-RELATED"/>
    <property type="match status" value="1"/>
</dbReference>
<dbReference type="PANTHER" id="PTHR22945">
    <property type="entry name" value="SERPENTINE RECEPTOR, CLASS D DELTA"/>
    <property type="match status" value="1"/>
</dbReference>
<dbReference type="Pfam" id="PF10317">
    <property type="entry name" value="7TM_GPCR_Srd"/>
    <property type="match status" value="1"/>
</dbReference>
<dbReference type="SUPFAM" id="SSF81321">
    <property type="entry name" value="Family A G protein-coupled receptor-like"/>
    <property type="match status" value="1"/>
</dbReference>
<reference key="1">
    <citation type="journal article" date="1998" name="Science">
        <title>Genome sequence of the nematode C. elegans: a platform for investigating biology.</title>
        <authorList>
            <consortium name="The C. elegans sequencing consortium"/>
        </authorList>
    </citation>
    <scope>NUCLEOTIDE SEQUENCE [LARGE SCALE GENOMIC DNA]</scope>
    <source>
        <strain>Bristol N2</strain>
    </source>
</reference>
<protein>
    <recommendedName>
        <fullName>Serpentine receptor class delta-25</fullName>
        <shortName>Protein srd-25</shortName>
    </recommendedName>
</protein>
<feature type="chain" id="PRO_0000104514" description="Serpentine receptor class delta-25">
    <location>
        <begin position="1"/>
        <end position="318"/>
    </location>
</feature>
<feature type="transmembrane region" description="Helical" evidence="1">
    <location>
        <begin position="5"/>
        <end position="25"/>
    </location>
</feature>
<feature type="transmembrane region" description="Helical" evidence="1">
    <location>
        <begin position="38"/>
        <end position="58"/>
    </location>
</feature>
<feature type="transmembrane region" description="Helical" evidence="1">
    <location>
        <begin position="88"/>
        <end position="108"/>
    </location>
</feature>
<feature type="transmembrane region" description="Helical" evidence="1">
    <location>
        <begin position="126"/>
        <end position="146"/>
    </location>
</feature>
<feature type="transmembrane region" description="Helical" evidence="1">
    <location>
        <begin position="176"/>
        <end position="196"/>
    </location>
</feature>
<feature type="transmembrane region" description="Helical" evidence="1">
    <location>
        <begin position="226"/>
        <end position="246"/>
    </location>
</feature>
<feature type="transmembrane region" description="Helical" evidence="1">
    <location>
        <begin position="258"/>
        <end position="278"/>
    </location>
</feature>
<proteinExistence type="inferred from homology"/>
<keyword id="KW-0472">Membrane</keyword>
<keyword id="KW-1185">Reference proteome</keyword>
<keyword id="KW-0812">Transmembrane</keyword>
<keyword id="KW-1133">Transmembrane helix</keyword>